<proteinExistence type="evidence at protein level"/>
<feature type="chain" id="PRO_0000438622" description="Protein NPG1">
    <location>
        <begin position="1"/>
        <end position="704"/>
    </location>
</feature>
<feature type="repeat" description="TPR 1" evidence="1">
    <location>
        <begin position="24"/>
        <end position="57"/>
    </location>
</feature>
<feature type="repeat" description="TPR 2" evidence="1">
    <location>
        <begin position="58"/>
        <end position="90"/>
    </location>
</feature>
<feature type="repeat" description="TPR 3" evidence="2">
    <location>
        <begin position="177"/>
        <end position="210"/>
    </location>
</feature>
<feature type="repeat" description="TPR 4" evidence="2">
    <location>
        <begin position="309"/>
        <end position="342"/>
    </location>
</feature>
<feature type="repeat" description="TPR 5" evidence="2">
    <location>
        <begin position="430"/>
        <end position="463"/>
    </location>
</feature>
<feature type="repeat" description="TPR 6" evidence="1">
    <location>
        <begin position="555"/>
        <end position="588"/>
    </location>
</feature>
<feature type="repeat" description="TPR 7" evidence="2">
    <location>
        <begin position="589"/>
        <end position="622"/>
    </location>
</feature>
<feature type="repeat" description="TPR 8" evidence="2">
    <location>
        <begin position="662"/>
        <end position="695"/>
    </location>
</feature>
<accession>Q8GZN1</accession>
<accession>Q9SKX3</accession>
<organism>
    <name type="scientific">Arabidopsis thaliana</name>
    <name type="common">Mouse-ear cress</name>
    <dbReference type="NCBI Taxonomy" id="3702"/>
    <lineage>
        <taxon>Eukaryota</taxon>
        <taxon>Viridiplantae</taxon>
        <taxon>Streptophyta</taxon>
        <taxon>Embryophyta</taxon>
        <taxon>Tracheophyta</taxon>
        <taxon>Spermatophyta</taxon>
        <taxon>Magnoliopsida</taxon>
        <taxon>eudicotyledons</taxon>
        <taxon>Gunneridae</taxon>
        <taxon>Pentapetalae</taxon>
        <taxon>rosids</taxon>
        <taxon>malvids</taxon>
        <taxon>Brassicales</taxon>
        <taxon>Brassicaceae</taxon>
        <taxon>Camelineae</taxon>
        <taxon>Arabidopsis</taxon>
    </lineage>
</organism>
<comment type="function">
    <text evidence="4">Calmodulin-binding protein essential for pollen germination, but not necessary for microsporogenesis or gametogenesis (PubMed:12928497).</text>
</comment>
<comment type="subunit">
    <text evidence="3 4">Interacts with calmodulin in a calcium-dependent manner.</text>
</comment>
<comment type="tissue specificity">
    <text evidence="4">Expressed only in pollen and in pollen tubes.</text>
</comment>
<comment type="domain">
    <text evidence="4">The calmodulin-binding domain (CBD) is located between A-448 and A-496.</text>
</comment>
<comment type="disruption phenotype">
    <text evidence="4">Normal pollen development, but no pollen germination.</text>
</comment>
<comment type="sequence caution" evidence="6">
    <conflict type="erroneous gene model prediction">
        <sequence resource="EMBL-CDS" id="AAD22127"/>
    </conflict>
</comment>
<protein>
    <recommendedName>
        <fullName evidence="5">Protein NPG1</fullName>
    </recommendedName>
    <alternativeName>
        <fullName evidence="5">NO POLLEN GERMINATION 1</fullName>
    </alternativeName>
</protein>
<name>NPG1_ARATH</name>
<gene>
    <name evidence="5" type="primary">NPG1</name>
    <name evidence="5" type="synonym">NPG</name>
    <name evidence="7" type="ordered locus">At2g43040</name>
    <name evidence="8" type="ORF">MFL8.10</name>
</gene>
<dbReference type="EMBL" id="AF474176">
    <property type="protein sequence ID" value="AAO14644.1"/>
    <property type="molecule type" value="mRNA"/>
</dbReference>
<dbReference type="EMBL" id="AC006224">
    <property type="protein sequence ID" value="AAD22127.1"/>
    <property type="status" value="ALT_SEQ"/>
    <property type="molecule type" value="Genomic_DNA"/>
</dbReference>
<dbReference type="EMBL" id="CP002685">
    <property type="protein sequence ID" value="AEC10202.1"/>
    <property type="molecule type" value="Genomic_DNA"/>
</dbReference>
<dbReference type="EMBL" id="CP002685">
    <property type="protein sequence ID" value="ANM62195.1"/>
    <property type="molecule type" value="Genomic_DNA"/>
</dbReference>
<dbReference type="EMBL" id="BT046199">
    <property type="protein sequence ID" value="ACI49798.1"/>
    <property type="molecule type" value="mRNA"/>
</dbReference>
<dbReference type="PIR" id="C84861">
    <property type="entry name" value="C84861"/>
</dbReference>
<dbReference type="RefSeq" id="NP_001324372.1">
    <property type="nucleotide sequence ID" value="NM_001337010.1"/>
</dbReference>
<dbReference type="RefSeq" id="NP_850382.1">
    <property type="nucleotide sequence ID" value="NM_180051.3"/>
</dbReference>
<dbReference type="SMR" id="Q8GZN1"/>
<dbReference type="FunCoup" id="Q8GZN1">
    <property type="interactions" value="402"/>
</dbReference>
<dbReference type="STRING" id="3702.Q8GZN1"/>
<dbReference type="iPTMnet" id="Q8GZN1"/>
<dbReference type="PaxDb" id="3702-AT2G43040.1"/>
<dbReference type="ProteomicsDB" id="249445"/>
<dbReference type="EnsemblPlants" id="AT2G43040.1">
    <property type="protein sequence ID" value="AT2G43040.1"/>
    <property type="gene ID" value="AT2G43040"/>
</dbReference>
<dbReference type="EnsemblPlants" id="AT2G43040.2">
    <property type="protein sequence ID" value="AT2G43040.2"/>
    <property type="gene ID" value="AT2G43040"/>
</dbReference>
<dbReference type="GeneID" id="818906"/>
<dbReference type="Gramene" id="AT2G43040.1">
    <property type="protein sequence ID" value="AT2G43040.1"/>
    <property type="gene ID" value="AT2G43040"/>
</dbReference>
<dbReference type="Gramene" id="AT2G43040.2">
    <property type="protein sequence ID" value="AT2G43040.2"/>
    <property type="gene ID" value="AT2G43040"/>
</dbReference>
<dbReference type="KEGG" id="ath:AT2G43040"/>
<dbReference type="Araport" id="AT2G43040"/>
<dbReference type="TAIR" id="AT2G43040">
    <property type="gene designation" value="NPG1"/>
</dbReference>
<dbReference type="eggNOG" id="KOG4162">
    <property type="taxonomic scope" value="Eukaryota"/>
</dbReference>
<dbReference type="HOGENOM" id="CLU_024601_0_0_1"/>
<dbReference type="InParanoid" id="Q8GZN1"/>
<dbReference type="OMA" id="NEFDIWH"/>
<dbReference type="OrthoDB" id="29013at2759"/>
<dbReference type="PhylomeDB" id="Q8GZN1"/>
<dbReference type="PRO" id="PR:Q8GZN1"/>
<dbReference type="Proteomes" id="UP000006548">
    <property type="component" value="Chromosome 2"/>
</dbReference>
<dbReference type="ExpressionAtlas" id="Q8GZN1">
    <property type="expression patterns" value="baseline and differential"/>
</dbReference>
<dbReference type="GO" id="GO:0031234">
    <property type="term" value="C:extrinsic component of cytoplasmic side of plasma membrane"/>
    <property type="evidence" value="ECO:0000314"/>
    <property type="project" value="TAIR"/>
</dbReference>
<dbReference type="GO" id="GO:0005886">
    <property type="term" value="C:plasma membrane"/>
    <property type="evidence" value="ECO:0000314"/>
    <property type="project" value="TAIR"/>
</dbReference>
<dbReference type="GO" id="GO:0005516">
    <property type="term" value="F:calmodulin binding"/>
    <property type="evidence" value="ECO:0000314"/>
    <property type="project" value="TAIR"/>
</dbReference>
<dbReference type="GO" id="GO:0009555">
    <property type="term" value="P:pollen development"/>
    <property type="evidence" value="ECO:0000316"/>
    <property type="project" value="TAIR"/>
</dbReference>
<dbReference type="GO" id="GO:0009846">
    <property type="term" value="P:pollen germination"/>
    <property type="evidence" value="ECO:0000315"/>
    <property type="project" value="TAIR"/>
</dbReference>
<dbReference type="FunFam" id="1.25.40.10:FF:002569">
    <property type="entry name" value="NPG1"/>
    <property type="match status" value="1"/>
</dbReference>
<dbReference type="FunFam" id="1.25.40.10:FF:001270">
    <property type="entry name" value="Protein NPG1"/>
    <property type="match status" value="1"/>
</dbReference>
<dbReference type="Gene3D" id="1.25.40.10">
    <property type="entry name" value="Tetratricopeptide repeat domain"/>
    <property type="match status" value="3"/>
</dbReference>
<dbReference type="InterPro" id="IPR043376">
    <property type="entry name" value="NPG1-like"/>
</dbReference>
<dbReference type="InterPro" id="IPR011990">
    <property type="entry name" value="TPR-like_helical_dom_sf"/>
</dbReference>
<dbReference type="InterPro" id="IPR019734">
    <property type="entry name" value="TPR_rpt"/>
</dbReference>
<dbReference type="PANTHER" id="PTHR44102">
    <property type="entry name" value="PROTEIN NPG1"/>
    <property type="match status" value="1"/>
</dbReference>
<dbReference type="PANTHER" id="PTHR44102:SF5">
    <property type="entry name" value="PROTEIN NPG1"/>
    <property type="match status" value="1"/>
</dbReference>
<dbReference type="Pfam" id="PF13432">
    <property type="entry name" value="TPR_16"/>
    <property type="match status" value="1"/>
</dbReference>
<dbReference type="SMART" id="SM00028">
    <property type="entry name" value="TPR"/>
    <property type="match status" value="7"/>
</dbReference>
<dbReference type="SUPFAM" id="SSF48452">
    <property type="entry name" value="TPR-like"/>
    <property type="match status" value="2"/>
</dbReference>
<dbReference type="PROSITE" id="PS50005">
    <property type="entry name" value="TPR"/>
    <property type="match status" value="5"/>
</dbReference>
<dbReference type="PROSITE" id="PS50293">
    <property type="entry name" value="TPR_REGION"/>
    <property type="match status" value="2"/>
</dbReference>
<reference key="1">
    <citation type="journal article" date="2003" name="Proc. Natl. Acad. Sci. U.S.A.">
        <title>A calmodulin-binding protein from Arabidopsis has an essential role in pollen germination.</title>
        <authorList>
            <person name="Golovkin M."/>
            <person name="Reddy A."/>
        </authorList>
    </citation>
    <scope>NUCLEOTIDE SEQUENCE [MRNA]</scope>
    <scope>FUNCTION</scope>
    <scope>GENE FAMILY</scope>
    <scope>NOMENCLATURE</scope>
    <scope>INTERACTION WITH CALMODULIN</scope>
    <scope>DOMAIN</scope>
    <scope>TISSUE SPECIFICITY</scope>
    <scope>DISRUPTION PHENOTYPE</scope>
</reference>
<reference key="2">
    <citation type="journal article" date="1999" name="Nature">
        <title>Sequence and analysis of chromosome 2 of the plant Arabidopsis thaliana.</title>
        <authorList>
            <person name="Lin X."/>
            <person name="Kaul S."/>
            <person name="Rounsley S.D."/>
            <person name="Shea T.P."/>
            <person name="Benito M.-I."/>
            <person name="Town C.D."/>
            <person name="Fujii C.Y."/>
            <person name="Mason T.M."/>
            <person name="Bowman C.L."/>
            <person name="Barnstead M.E."/>
            <person name="Feldblyum T.V."/>
            <person name="Buell C.R."/>
            <person name="Ketchum K.A."/>
            <person name="Lee J.J."/>
            <person name="Ronning C.M."/>
            <person name="Koo H.L."/>
            <person name="Moffat K.S."/>
            <person name="Cronin L.A."/>
            <person name="Shen M."/>
            <person name="Pai G."/>
            <person name="Van Aken S."/>
            <person name="Umayam L."/>
            <person name="Tallon L.J."/>
            <person name="Gill J.E."/>
            <person name="Adams M.D."/>
            <person name="Carrera A.J."/>
            <person name="Creasy T.H."/>
            <person name="Goodman H.M."/>
            <person name="Somerville C.R."/>
            <person name="Copenhaver G.P."/>
            <person name="Preuss D."/>
            <person name="Nierman W.C."/>
            <person name="White O."/>
            <person name="Eisen J.A."/>
            <person name="Salzberg S.L."/>
            <person name="Fraser C.M."/>
            <person name="Venter J.C."/>
        </authorList>
    </citation>
    <scope>NUCLEOTIDE SEQUENCE [LARGE SCALE GENOMIC DNA]</scope>
    <source>
        <strain>cv. Columbia</strain>
    </source>
</reference>
<reference key="3">
    <citation type="journal article" date="2017" name="Plant J.">
        <title>Araport11: a complete reannotation of the Arabidopsis thaliana reference genome.</title>
        <authorList>
            <person name="Cheng C.Y."/>
            <person name="Krishnakumar V."/>
            <person name="Chan A.P."/>
            <person name="Thibaud-Nissen F."/>
            <person name="Schobel S."/>
            <person name="Town C.D."/>
        </authorList>
    </citation>
    <scope>GENOME REANNOTATION</scope>
    <source>
        <strain>cv. Columbia</strain>
    </source>
</reference>
<reference key="4">
    <citation type="submission" date="2008-10" db="EMBL/GenBank/DDBJ databases">
        <title>Arabidopsis ORF clones.</title>
        <authorList>
            <person name="de los Reyes C."/>
            <person name="Quan R."/>
            <person name="Chen H."/>
            <person name="Bautista V."/>
            <person name="Kim C.J."/>
            <person name="Ecker J.R."/>
        </authorList>
    </citation>
    <scope>NUCLEOTIDE SEQUENCE [LARGE SCALE MRNA]</scope>
    <source>
        <strain>cv. Columbia</strain>
    </source>
</reference>
<reference key="5">
    <citation type="journal article" date="2002" name="J. Biol. Chem.">
        <title>Genes encoding calmodulin-binding proteins in the Arabidopsis genome.</title>
        <authorList>
            <person name="Reddy V.S."/>
            <person name="Ali G.S."/>
            <person name="Reddy A.S.N."/>
        </authorList>
    </citation>
    <scope>INTERACTION WITH CALMODULIN</scope>
</reference>
<evidence type="ECO:0000255" key="1"/>
<evidence type="ECO:0000255" key="2">
    <source>
        <dbReference type="PROSITE-ProRule" id="PRU00339"/>
    </source>
</evidence>
<evidence type="ECO:0000269" key="3">
    <source>
    </source>
</evidence>
<evidence type="ECO:0000269" key="4">
    <source>
    </source>
</evidence>
<evidence type="ECO:0000303" key="5">
    <source>
    </source>
</evidence>
<evidence type="ECO:0000305" key="6"/>
<evidence type="ECO:0000312" key="7">
    <source>
        <dbReference type="Araport" id="AT2G43040"/>
    </source>
</evidence>
<evidence type="ECO:0000312" key="8">
    <source>
        <dbReference type="EMBL" id="AAD22127.1"/>
    </source>
</evidence>
<keyword id="KW-0112">Calmodulin-binding</keyword>
<keyword id="KW-1185">Reference proteome</keyword>
<keyword id="KW-0677">Repeat</keyword>
<keyword id="KW-0802">TPR repeat</keyword>
<sequence>MLGNQSADFSEKGEDEIVRQLCANGICMKTTEVEAKLDEGNIQEAESSLREGLSLNFEEARALLGRLEYQRGNLEGALRVFEGIDLQAAIQRLQVSVPLEKPATKKNRPREPQQSVSQHAANLVLEAIYLKAKSLQKLGRITEAAHECKSVLDSVEKIFQQGIPDAQVDNKLQETVSHAVELLPALWKESGDYQEAISAYRRALLSQWNLDNDCCARIQKDFAVFLLHSGVEASPPSLGSQIEGSYIPRNNIEEAILLLMILLKKFNLGKAKWDPSVFEHLTFALSLCSQTAVLAKQLEEVMPGVFSRIERWNTLALSYSAAGQNSAAVNLLRKSLHKHEQPDDLVALLLAAKLCSEEPSLAAEGTGYAQRAINNAQGMDEHLKGVGLRMLGLCLGKQAKVPTSDFERSRLQSESLKALDGAIAFEHNNPDLIFELGVQYAEQRNLKAASRYAKEFIDATGGSVLKGWRFLALVLSAQQRFSEAEVVTDAALDETAKWDQGPLLRLKAKLKISQSNPTEAVETYRYLLALVQAQRKSFGPLRTLSQMEEDKVNEFEVWHGLAYLYSSLSHWNDVEVCLKKAGELKQYSASMLHTEGRMWEGRKEFKPALAAFLDGLLLDGSSVPCKVAVGALLSERGKDHQPTLPVARSLLSDALRIDPTNRKAWYYLGMVHKSDGRIADATDCFQAASMLEESDPIESFSTIL</sequence>